<feature type="chain" id="PRO_0000299738" description="Putative uncharacterized protein YOR333C">
    <location>
        <begin position="1"/>
        <end position="138"/>
    </location>
</feature>
<protein>
    <recommendedName>
        <fullName>Putative uncharacterized protein YOR333C</fullName>
    </recommendedName>
</protein>
<accession>Q08789</accession>
<gene>
    <name type="ordered locus">YOR333C</name>
    <name type="ORF">O6244</name>
</gene>
<proteinExistence type="uncertain"/>
<dbReference type="EMBL" id="Z75241">
    <property type="protein sequence ID" value="CAA99655.1"/>
    <property type="molecule type" value="Genomic_DNA"/>
</dbReference>
<dbReference type="EMBL" id="AY693354">
    <property type="protein sequence ID" value="AAT93373.1"/>
    <property type="molecule type" value="Genomic_DNA"/>
</dbReference>
<dbReference type="PIR" id="S67240">
    <property type="entry name" value="S67240"/>
</dbReference>
<dbReference type="DIP" id="DIP-4063N"/>
<dbReference type="STRING" id="4932.YOR333C"/>
<dbReference type="PaxDb" id="4932-YOR333C"/>
<dbReference type="EnsemblFungi" id="YOR333C_mRNA">
    <property type="protein sequence ID" value="YOR333C"/>
    <property type="gene ID" value="YOR333C"/>
</dbReference>
<dbReference type="AGR" id="SGD:S000005860"/>
<dbReference type="SGD" id="S000005860">
    <property type="gene designation" value="YOR333C"/>
</dbReference>
<dbReference type="HOGENOM" id="CLU_1856855_0_0_1"/>
<dbReference type="OMA" id="HEMNSES"/>
<reference key="1">
    <citation type="journal article" date="1997" name="Nature">
        <title>The nucleotide sequence of Saccharomyces cerevisiae chromosome XV.</title>
        <authorList>
            <person name="Dujon B."/>
            <person name="Albermann K."/>
            <person name="Aldea M."/>
            <person name="Alexandraki D."/>
            <person name="Ansorge W."/>
            <person name="Arino J."/>
            <person name="Benes V."/>
            <person name="Bohn C."/>
            <person name="Bolotin-Fukuhara M."/>
            <person name="Bordonne R."/>
            <person name="Boyer J."/>
            <person name="Camasses A."/>
            <person name="Casamayor A."/>
            <person name="Casas C."/>
            <person name="Cheret G."/>
            <person name="Cziepluch C."/>
            <person name="Daignan-Fornier B."/>
            <person name="Dang V.-D."/>
            <person name="de Haan M."/>
            <person name="Delius H."/>
            <person name="Durand P."/>
            <person name="Fairhead C."/>
            <person name="Feldmann H."/>
            <person name="Gaillon L."/>
            <person name="Galisson F."/>
            <person name="Gamo F.-J."/>
            <person name="Gancedo C."/>
            <person name="Goffeau A."/>
            <person name="Goulding S.E."/>
            <person name="Grivell L.A."/>
            <person name="Habbig B."/>
            <person name="Hand N.J."/>
            <person name="Hani J."/>
            <person name="Hattenhorst U."/>
            <person name="Hebling U."/>
            <person name="Hernando Y."/>
            <person name="Herrero E."/>
            <person name="Heumann K."/>
            <person name="Hiesel R."/>
            <person name="Hilger F."/>
            <person name="Hofmann B."/>
            <person name="Hollenberg C.P."/>
            <person name="Hughes B."/>
            <person name="Jauniaux J.-C."/>
            <person name="Kalogeropoulos A."/>
            <person name="Katsoulou C."/>
            <person name="Kordes E."/>
            <person name="Lafuente M.J."/>
            <person name="Landt O."/>
            <person name="Louis E.J."/>
            <person name="Maarse A.C."/>
            <person name="Madania A."/>
            <person name="Mannhaupt G."/>
            <person name="Marck C."/>
            <person name="Martin R.P."/>
            <person name="Mewes H.-W."/>
            <person name="Michaux G."/>
            <person name="Paces V."/>
            <person name="Parle-McDermott A.G."/>
            <person name="Pearson B.M."/>
            <person name="Perrin A."/>
            <person name="Pettersson B."/>
            <person name="Poch O."/>
            <person name="Pohl T.M."/>
            <person name="Poirey R."/>
            <person name="Portetelle D."/>
            <person name="Pujol A."/>
            <person name="Purnelle B."/>
            <person name="Ramezani Rad M."/>
            <person name="Rechmann S."/>
            <person name="Schwager C."/>
            <person name="Schweizer M."/>
            <person name="Sor F."/>
            <person name="Sterky F."/>
            <person name="Tarassov I.A."/>
            <person name="Teodoru C."/>
            <person name="Tettelin H."/>
            <person name="Thierry A."/>
            <person name="Tobiasch E."/>
            <person name="Tzermia M."/>
            <person name="Uhlen M."/>
            <person name="Unseld M."/>
            <person name="Valens M."/>
            <person name="Vandenbol M."/>
            <person name="Vetter I."/>
            <person name="Vlcek C."/>
            <person name="Voet M."/>
            <person name="Volckaert G."/>
            <person name="Voss H."/>
            <person name="Wambutt R."/>
            <person name="Wedler H."/>
            <person name="Wiemann S."/>
            <person name="Winsor B."/>
            <person name="Wolfe K.H."/>
            <person name="Zollner A."/>
            <person name="Zumstein E."/>
            <person name="Kleine K."/>
        </authorList>
    </citation>
    <scope>NUCLEOTIDE SEQUENCE [LARGE SCALE GENOMIC DNA]</scope>
    <source>
        <strain>ATCC 204508 / S288c</strain>
    </source>
</reference>
<reference key="2">
    <citation type="journal article" date="2014" name="G3 (Bethesda)">
        <title>The reference genome sequence of Saccharomyces cerevisiae: Then and now.</title>
        <authorList>
            <person name="Engel S.R."/>
            <person name="Dietrich F.S."/>
            <person name="Fisk D.G."/>
            <person name="Binkley G."/>
            <person name="Balakrishnan R."/>
            <person name="Costanzo M.C."/>
            <person name="Dwight S.S."/>
            <person name="Hitz B.C."/>
            <person name="Karra K."/>
            <person name="Nash R.S."/>
            <person name="Weng S."/>
            <person name="Wong E.D."/>
            <person name="Lloyd P."/>
            <person name="Skrzypek M.S."/>
            <person name="Miyasato S.R."/>
            <person name="Simison M."/>
            <person name="Cherry J.M."/>
        </authorList>
    </citation>
    <scope>GENOME REANNOTATION</scope>
    <source>
        <strain>ATCC 204508 / S288c</strain>
    </source>
</reference>
<reference key="3">
    <citation type="journal article" date="2007" name="Genome Res.">
        <title>Approaching a complete repository of sequence-verified protein-encoding clones for Saccharomyces cerevisiae.</title>
        <authorList>
            <person name="Hu Y."/>
            <person name="Rolfs A."/>
            <person name="Bhullar B."/>
            <person name="Murthy T.V.S."/>
            <person name="Zhu C."/>
            <person name="Berger M.F."/>
            <person name="Camargo A.A."/>
            <person name="Kelley F."/>
            <person name="McCarron S."/>
            <person name="Jepson D."/>
            <person name="Richardson A."/>
            <person name="Raphael J."/>
            <person name="Moreira D."/>
            <person name="Taycher E."/>
            <person name="Zuo D."/>
            <person name="Mohr S."/>
            <person name="Kane M.F."/>
            <person name="Williamson J."/>
            <person name="Simpson A.J.G."/>
            <person name="Bulyk M.L."/>
            <person name="Harlow E."/>
            <person name="Marsischky G."/>
            <person name="Kolodner R.D."/>
            <person name="LaBaer J."/>
        </authorList>
    </citation>
    <scope>NUCLEOTIDE SEQUENCE [GENOMIC DNA]</scope>
    <source>
        <strain>ATCC 204508 / S288c</strain>
    </source>
</reference>
<evidence type="ECO:0000305" key="1"/>
<evidence type="ECO:0000305" key="2">
    <source>
    </source>
</evidence>
<sequence>MTIQFGLHMMVGIISIEELSIFLRSLGKRECSVKKDHLGNFSDIEIIFPLELNTVHEMNSESEAEMGFNDSNCFRNMVLLVFAAVDVSAYFLRNGVFGLPKVILDKGWKQDIERTRRRRFMRCLIENHFHYDCVYRYC</sequence>
<comment type="miscellaneous">
    <text evidence="1">Almost completely overlaps MRS2.</text>
</comment>
<comment type="caution">
    <text evidence="2">Product of a dubious gene prediction unlikely to encode a functional protein. Because of that it is not part of the S.cerevisiae S288c complete/reference proteome set.</text>
</comment>
<organism>
    <name type="scientific">Saccharomyces cerevisiae (strain ATCC 204508 / S288c)</name>
    <name type="common">Baker's yeast</name>
    <dbReference type="NCBI Taxonomy" id="559292"/>
    <lineage>
        <taxon>Eukaryota</taxon>
        <taxon>Fungi</taxon>
        <taxon>Dikarya</taxon>
        <taxon>Ascomycota</taxon>
        <taxon>Saccharomycotina</taxon>
        <taxon>Saccharomycetes</taxon>
        <taxon>Saccharomycetales</taxon>
        <taxon>Saccharomycetaceae</taxon>
        <taxon>Saccharomyces</taxon>
    </lineage>
</organism>
<name>YO333_YEAST</name>